<proteinExistence type="inferred from homology"/>
<gene>
    <name evidence="1" type="primary">rsmJ</name>
    <name type="ordered locus">PA14_16770</name>
</gene>
<protein>
    <recommendedName>
        <fullName evidence="1">Ribosomal RNA small subunit methyltransferase J</fullName>
        <ecNumber evidence="1">2.1.1.242</ecNumber>
    </recommendedName>
    <alternativeName>
        <fullName evidence="1">16S rRNA m2G1516 methyltransferase</fullName>
    </alternativeName>
    <alternativeName>
        <fullName evidence="1">rRNA (guanine-N(2)-)-methyltransferase</fullName>
    </alternativeName>
</protein>
<evidence type="ECO:0000255" key="1">
    <source>
        <dbReference type="HAMAP-Rule" id="MF_01523"/>
    </source>
</evidence>
<feature type="chain" id="PRO_0000292640" description="Ribosomal RNA small subunit methyltransferase J">
    <location>
        <begin position="1"/>
        <end position="261"/>
    </location>
</feature>
<feature type="binding site" evidence="1">
    <location>
        <begin position="109"/>
        <end position="110"/>
    </location>
    <ligand>
        <name>S-adenosyl-L-methionine</name>
        <dbReference type="ChEBI" id="CHEBI:59789"/>
    </ligand>
</feature>
<feature type="binding site" evidence="1">
    <location>
        <begin position="125"/>
        <end position="126"/>
    </location>
    <ligand>
        <name>S-adenosyl-L-methionine</name>
        <dbReference type="ChEBI" id="CHEBI:59789"/>
    </ligand>
</feature>
<feature type="binding site" evidence="1">
    <location>
        <position position="179"/>
    </location>
    <ligand>
        <name>S-adenosyl-L-methionine</name>
        <dbReference type="ChEBI" id="CHEBI:59789"/>
    </ligand>
</feature>
<accession>Q02RF2</accession>
<dbReference type="EC" id="2.1.1.242" evidence="1"/>
<dbReference type="EMBL" id="CP000438">
    <property type="protein sequence ID" value="ABJ12913.1"/>
    <property type="molecule type" value="Genomic_DNA"/>
</dbReference>
<dbReference type="RefSeq" id="WP_003137977.1">
    <property type="nucleotide sequence ID" value="NZ_CP034244.1"/>
</dbReference>
<dbReference type="SMR" id="Q02RF2"/>
<dbReference type="KEGG" id="pau:PA14_16770"/>
<dbReference type="PseudoCAP" id="PA14_16770"/>
<dbReference type="HOGENOM" id="CLU_076324_0_1_6"/>
<dbReference type="BioCyc" id="PAER208963:G1G74-1381-MONOMER"/>
<dbReference type="Proteomes" id="UP000000653">
    <property type="component" value="Chromosome"/>
</dbReference>
<dbReference type="GO" id="GO:0005737">
    <property type="term" value="C:cytoplasm"/>
    <property type="evidence" value="ECO:0007669"/>
    <property type="project" value="UniProtKB-SubCell"/>
</dbReference>
<dbReference type="GO" id="GO:0008990">
    <property type="term" value="F:rRNA (guanine-N2-)-methyltransferase activity"/>
    <property type="evidence" value="ECO:0007669"/>
    <property type="project" value="UniProtKB-UniRule"/>
</dbReference>
<dbReference type="CDD" id="cd02440">
    <property type="entry name" value="AdoMet_MTases"/>
    <property type="match status" value="1"/>
</dbReference>
<dbReference type="Gene3D" id="3.40.50.150">
    <property type="entry name" value="Vaccinia Virus protein VP39"/>
    <property type="match status" value="1"/>
</dbReference>
<dbReference type="HAMAP" id="MF_01523">
    <property type="entry name" value="16SrRNA_methyltr_J"/>
    <property type="match status" value="1"/>
</dbReference>
<dbReference type="InterPro" id="IPR007536">
    <property type="entry name" value="16SrRNA_methylTrfase_J"/>
</dbReference>
<dbReference type="InterPro" id="IPR029063">
    <property type="entry name" value="SAM-dependent_MTases_sf"/>
</dbReference>
<dbReference type="PANTHER" id="PTHR36112">
    <property type="entry name" value="RIBOSOMAL RNA SMALL SUBUNIT METHYLTRANSFERASE J"/>
    <property type="match status" value="1"/>
</dbReference>
<dbReference type="PANTHER" id="PTHR36112:SF1">
    <property type="entry name" value="RIBOSOMAL RNA SMALL SUBUNIT METHYLTRANSFERASE J"/>
    <property type="match status" value="1"/>
</dbReference>
<dbReference type="Pfam" id="PF04445">
    <property type="entry name" value="SAM_MT"/>
    <property type="match status" value="1"/>
</dbReference>
<dbReference type="SUPFAM" id="SSF53335">
    <property type="entry name" value="S-adenosyl-L-methionine-dependent methyltransferases"/>
    <property type="match status" value="1"/>
</dbReference>
<name>RSMJ_PSEAB</name>
<sequence length="261" mass="27862">MTDSTAPRLHVQALSADCAEAARRWAERLGLPLAADDEAEFAVQVGEEGLQVLQLGPDSPGPVRVDFVEGASAHRRKFGGGSGQMIAKAVGVQPGIRPRVLDATAGLGRDGFVLASLGCEVTLVERQPLIAALLEDGLERAGRDPDVAPIAARMRLLGGNSADLMRAWDGEAPQVVYLDPMFPHRDKSALVKKEMRLFRPLVGDDLDAPALLQAALALASHRVVVKRPRKAPIIEGPKPGYSLEGKSSRYDIYPKKALGKG</sequence>
<comment type="function">
    <text evidence="1">Specifically methylates the guanosine in position 1516 of 16S rRNA.</text>
</comment>
<comment type="catalytic activity">
    <reaction evidence="1">
        <text>guanosine(1516) in 16S rRNA + S-adenosyl-L-methionine = N(2)-methylguanosine(1516) in 16S rRNA + S-adenosyl-L-homocysteine + H(+)</text>
        <dbReference type="Rhea" id="RHEA:43220"/>
        <dbReference type="Rhea" id="RHEA-COMP:10412"/>
        <dbReference type="Rhea" id="RHEA-COMP:10413"/>
        <dbReference type="ChEBI" id="CHEBI:15378"/>
        <dbReference type="ChEBI" id="CHEBI:57856"/>
        <dbReference type="ChEBI" id="CHEBI:59789"/>
        <dbReference type="ChEBI" id="CHEBI:74269"/>
        <dbReference type="ChEBI" id="CHEBI:74481"/>
        <dbReference type="EC" id="2.1.1.242"/>
    </reaction>
</comment>
<comment type="subcellular location">
    <subcellularLocation>
        <location evidence="1">Cytoplasm</location>
    </subcellularLocation>
</comment>
<comment type="similarity">
    <text evidence="1">Belongs to the methyltransferase superfamily. RsmJ family.</text>
</comment>
<keyword id="KW-0963">Cytoplasm</keyword>
<keyword id="KW-0489">Methyltransferase</keyword>
<keyword id="KW-0698">rRNA processing</keyword>
<keyword id="KW-0949">S-adenosyl-L-methionine</keyword>
<keyword id="KW-0808">Transferase</keyword>
<reference key="1">
    <citation type="journal article" date="2006" name="Genome Biol.">
        <title>Genomic analysis reveals that Pseudomonas aeruginosa virulence is combinatorial.</title>
        <authorList>
            <person name="Lee D.G."/>
            <person name="Urbach J.M."/>
            <person name="Wu G."/>
            <person name="Liberati N.T."/>
            <person name="Feinbaum R.L."/>
            <person name="Miyata S."/>
            <person name="Diggins L.T."/>
            <person name="He J."/>
            <person name="Saucier M."/>
            <person name="Deziel E."/>
            <person name="Friedman L."/>
            <person name="Li L."/>
            <person name="Grills G."/>
            <person name="Montgomery K."/>
            <person name="Kucherlapati R."/>
            <person name="Rahme L.G."/>
            <person name="Ausubel F.M."/>
        </authorList>
    </citation>
    <scope>NUCLEOTIDE SEQUENCE [LARGE SCALE GENOMIC DNA]</scope>
    <source>
        <strain>UCBPP-PA14</strain>
    </source>
</reference>
<organism>
    <name type="scientific">Pseudomonas aeruginosa (strain UCBPP-PA14)</name>
    <dbReference type="NCBI Taxonomy" id="208963"/>
    <lineage>
        <taxon>Bacteria</taxon>
        <taxon>Pseudomonadati</taxon>
        <taxon>Pseudomonadota</taxon>
        <taxon>Gammaproteobacteria</taxon>
        <taxon>Pseudomonadales</taxon>
        <taxon>Pseudomonadaceae</taxon>
        <taxon>Pseudomonas</taxon>
    </lineage>
</organism>